<organism>
    <name type="scientific">Leptothrix cholodnii (strain ATCC 51168 / LMG 8142 / SP-6)</name>
    <name type="common">Leptothrix discophora (strain SP-6)</name>
    <dbReference type="NCBI Taxonomy" id="395495"/>
    <lineage>
        <taxon>Bacteria</taxon>
        <taxon>Pseudomonadati</taxon>
        <taxon>Pseudomonadota</taxon>
        <taxon>Betaproteobacteria</taxon>
        <taxon>Burkholderiales</taxon>
        <taxon>Sphaerotilaceae</taxon>
        <taxon>Leptothrix</taxon>
    </lineage>
</organism>
<comment type="similarity">
    <text evidence="1">Belongs to the bacterial ribosomal protein bL35 family.</text>
</comment>
<proteinExistence type="inferred from homology"/>
<reference key="1">
    <citation type="submission" date="2008-03" db="EMBL/GenBank/DDBJ databases">
        <title>Complete sequence of Leptothrix cholodnii SP-6.</title>
        <authorList>
            <consortium name="US DOE Joint Genome Institute"/>
            <person name="Copeland A."/>
            <person name="Lucas S."/>
            <person name="Lapidus A."/>
            <person name="Glavina del Rio T."/>
            <person name="Dalin E."/>
            <person name="Tice H."/>
            <person name="Bruce D."/>
            <person name="Goodwin L."/>
            <person name="Pitluck S."/>
            <person name="Chertkov O."/>
            <person name="Brettin T."/>
            <person name="Detter J.C."/>
            <person name="Han C."/>
            <person name="Kuske C.R."/>
            <person name="Schmutz J."/>
            <person name="Larimer F."/>
            <person name="Land M."/>
            <person name="Hauser L."/>
            <person name="Kyrpides N."/>
            <person name="Lykidis A."/>
            <person name="Emerson D."/>
            <person name="Richardson P."/>
        </authorList>
    </citation>
    <scope>NUCLEOTIDE SEQUENCE [LARGE SCALE GENOMIC DNA]</scope>
    <source>
        <strain>ATCC 51168 / LMG 8142 / SP-6</strain>
    </source>
</reference>
<protein>
    <recommendedName>
        <fullName evidence="1">Large ribosomal subunit protein bL35</fullName>
    </recommendedName>
    <alternativeName>
        <fullName evidence="2">50S ribosomal protein L35</fullName>
    </alternativeName>
</protein>
<feature type="chain" id="PRO_1000127371" description="Large ribosomal subunit protein bL35">
    <location>
        <begin position="1"/>
        <end position="67"/>
    </location>
</feature>
<dbReference type="EMBL" id="CP001013">
    <property type="protein sequence ID" value="ACB34014.1"/>
    <property type="molecule type" value="Genomic_DNA"/>
</dbReference>
<dbReference type="RefSeq" id="WP_012346775.1">
    <property type="nucleotide sequence ID" value="NC_010524.1"/>
</dbReference>
<dbReference type="SMR" id="B1XYZ5"/>
<dbReference type="STRING" id="395495.Lcho_1747"/>
<dbReference type="KEGG" id="lch:Lcho_1747"/>
<dbReference type="eggNOG" id="COG0291">
    <property type="taxonomic scope" value="Bacteria"/>
</dbReference>
<dbReference type="HOGENOM" id="CLU_169643_1_0_4"/>
<dbReference type="OrthoDB" id="47476at2"/>
<dbReference type="Proteomes" id="UP000001693">
    <property type="component" value="Chromosome"/>
</dbReference>
<dbReference type="GO" id="GO:0022625">
    <property type="term" value="C:cytosolic large ribosomal subunit"/>
    <property type="evidence" value="ECO:0007669"/>
    <property type="project" value="TreeGrafter"/>
</dbReference>
<dbReference type="GO" id="GO:0003735">
    <property type="term" value="F:structural constituent of ribosome"/>
    <property type="evidence" value="ECO:0007669"/>
    <property type="project" value="InterPro"/>
</dbReference>
<dbReference type="GO" id="GO:0006412">
    <property type="term" value="P:translation"/>
    <property type="evidence" value="ECO:0007669"/>
    <property type="project" value="UniProtKB-UniRule"/>
</dbReference>
<dbReference type="FunFam" id="4.10.410.60:FF:000001">
    <property type="entry name" value="50S ribosomal protein L35"/>
    <property type="match status" value="1"/>
</dbReference>
<dbReference type="Gene3D" id="4.10.410.60">
    <property type="match status" value="1"/>
</dbReference>
<dbReference type="HAMAP" id="MF_00514">
    <property type="entry name" value="Ribosomal_bL35"/>
    <property type="match status" value="1"/>
</dbReference>
<dbReference type="InterPro" id="IPR001706">
    <property type="entry name" value="Ribosomal_bL35"/>
</dbReference>
<dbReference type="InterPro" id="IPR021137">
    <property type="entry name" value="Ribosomal_bL35-like"/>
</dbReference>
<dbReference type="InterPro" id="IPR018265">
    <property type="entry name" value="Ribosomal_bL35_CS"/>
</dbReference>
<dbReference type="InterPro" id="IPR037229">
    <property type="entry name" value="Ribosomal_bL35_sf"/>
</dbReference>
<dbReference type="NCBIfam" id="TIGR00001">
    <property type="entry name" value="rpmI_bact"/>
    <property type="match status" value="1"/>
</dbReference>
<dbReference type="PANTHER" id="PTHR33343">
    <property type="entry name" value="54S RIBOSOMAL PROTEIN BL35M"/>
    <property type="match status" value="1"/>
</dbReference>
<dbReference type="PANTHER" id="PTHR33343:SF1">
    <property type="entry name" value="LARGE RIBOSOMAL SUBUNIT PROTEIN BL35M"/>
    <property type="match status" value="1"/>
</dbReference>
<dbReference type="Pfam" id="PF01632">
    <property type="entry name" value="Ribosomal_L35p"/>
    <property type="match status" value="1"/>
</dbReference>
<dbReference type="PRINTS" id="PR00064">
    <property type="entry name" value="RIBOSOMALL35"/>
</dbReference>
<dbReference type="SUPFAM" id="SSF143034">
    <property type="entry name" value="L35p-like"/>
    <property type="match status" value="1"/>
</dbReference>
<dbReference type="PROSITE" id="PS00936">
    <property type="entry name" value="RIBOSOMAL_L35"/>
    <property type="match status" value="1"/>
</dbReference>
<name>RL35_LEPCP</name>
<gene>
    <name evidence="1" type="primary">rpmI</name>
    <name type="ordered locus">Lcho_1747</name>
</gene>
<keyword id="KW-1185">Reference proteome</keyword>
<keyword id="KW-0687">Ribonucleoprotein</keyword>
<keyword id="KW-0689">Ribosomal protein</keyword>
<accession>B1XYZ5</accession>
<evidence type="ECO:0000255" key="1">
    <source>
        <dbReference type="HAMAP-Rule" id="MF_00514"/>
    </source>
</evidence>
<evidence type="ECO:0000305" key="2"/>
<sequence>MPKMKTKSSAKKRFRVRPGGTVKRGQAFKRHILTKKTTKNKRHLRGTVAVHETNMGHIAQMLPFAGL</sequence>